<organism>
    <name type="scientific">Fiji disease virus (isolate Sugarcane)</name>
    <name type="common">FDV</name>
    <dbReference type="NCBI Taxonomy" id="648172"/>
    <lineage>
        <taxon>Viruses</taxon>
        <taxon>Riboviria</taxon>
        <taxon>Orthornavirae</taxon>
        <taxon>Duplornaviricota</taxon>
        <taxon>Resentoviricetes</taxon>
        <taxon>Reovirales</taxon>
        <taxon>Spinareoviridae</taxon>
        <taxon>Fijivirus</taxon>
        <taxon>Fiji disease virus</taxon>
    </lineage>
</organism>
<reference key="1">
    <citation type="journal article" date="2003" name="Virus Genes">
        <title>Molecular analysis of Fiji disease Fijivirus genome segments 1 and 3.</title>
        <authorList>
            <person name="McQualter R.B."/>
            <person name="Smith G.R."/>
            <person name="Dale J.L."/>
            <person name="Harding R.M."/>
        </authorList>
    </citation>
    <scope>NUCLEOTIDE SEQUENCE [GENOMIC RNA]</scope>
</reference>
<gene>
    <name type="primary">S3</name>
</gene>
<name>VP3_FDVS</name>
<dbReference type="EMBL" id="AF359556">
    <property type="protein sequence ID" value="AAM00233.1"/>
    <property type="molecule type" value="Genomic_RNA"/>
</dbReference>
<dbReference type="RefSeq" id="YP_249761.1">
    <property type="nucleotide sequence ID" value="NC_007158.1"/>
</dbReference>
<dbReference type="SMR" id="Q8QV02"/>
<dbReference type="KEGG" id="vg:5075881"/>
<dbReference type="Proteomes" id="UP000001677">
    <property type="component" value="Genome"/>
</dbReference>
<organismHost>
    <name type="scientific">Saccharum officinarum</name>
    <name type="common">Sugarcane</name>
    <dbReference type="NCBI Taxonomy" id="4547"/>
</organismHost>
<proteinExistence type="predicted"/>
<accession>Q8QV02</accession>
<keyword id="KW-1185">Reference proteome</keyword>
<feature type="chain" id="PRO_0000403394" description="Putative structural protein VP3">
    <location>
        <begin position="1"/>
        <end position="1167"/>
    </location>
</feature>
<sequence>METDNLLKYLISQNTEQRIEQIENWQTLMQQSGYTSDYLTATAGTLRTKREIQHCKDVLSDISMKRWNTSLTQGRYSSDQLFFGLNECSGTNKALVDRMKINFNFHKLNFHGFAKYWILNGDFDKMCCYDSDRTKLFLTKKGNHITIDLNGITSSCNITNVFGHLTVDDKFEPNFDILIRIVQKDEYVVCQFINFTFNPKIKFFKQQPFTIEFIGNTLYFCVNSQLIFDVLDGYKGKDDLSLRDYYLCRIAYVNLLKLEHALEQKQKLDLGDENENLAKYVHQLALNALTGVSKLSEETIRTKTLSMELGYKKNIDIGIASQKILINQFTHDLFNNKFVTDFIGWNYTYGECDIEIAPIVCNLLTYLDNESSLLNSGPLSYTLLDEFGGHDRMFILQVKDESGNDYRMLCELQFSLKYKKFSYQGLKVFNADNLEYADCYLFGFGQNQVYGEKQTLNVNSIVSDKQGNLVYHVHALSSLVCRFKVISERIEYLGNALPTFNATLTFNKDLIKMSGNLRLVEDFDGSKKTKYLLSDEFTLENTILVSINFNICEGKQTNSAARYNGKTWPGLRSRDFKNDFYENDFEVVIHNLNYHSQFNEHSNRSDILYSACNCYHFVESDSCFTNRDESYLYWKVNSQTIPMEFDSRPYIKLYNRAFIQIPVLMKGGSNRIIGPKHKCLLNEDYYVNDYQYEITSDSPRVYLPYPNSSQIISIVDSAGKQLSNTLKIESFDVSKFNVLMLPDRFNNSLDVVGELITFKNELELMLRTNNVLYSMLHSLENRIINLERFCEHLNKTYEDKFNKASSIVQFLGDVFIFIGEMSLVQFPVLGIGLIFVGTLLDGMSRILKEDYFDGISEILISSLLLFLGERKMKYSFLEKLGFGKIKTESNLVLNEKVSSVGKRRSYSAYYASDDHKEFDSSLTLRDRLLRQIRSQNPVVFDFHHNSGVMIELKNKQKPSYQALNSSYTRIKRAIGSVGTNNGLERKLNDITSENHYLKSLLITTFDYFTYQVTNSIVIVFKVVFEVKIDGDDRSVEIINKDILYYRNDLEVAFSVFNSCRYDELTDKFPLKFKFEYSDFVNYMYVVCFLSKFGSKDNLLLESYDKFYDSLYLYSSNSDVFSSSINSNNMNRLIYKISHMSAFRTLEQDQDFLTILIRVKDNSSFLRL</sequence>
<protein>
    <recommendedName>
        <fullName>Putative structural protein VP3</fullName>
    </recommendedName>
</protein>